<feature type="chain" id="PRO_0000373517" description="Structural protein A137R">
    <location>
        <begin position="1"/>
        <end position="137"/>
    </location>
</feature>
<comment type="function">
    <text evidence="1">Plays a role in the inhibition of the host innate immune response. Mechanistically, promotes the autophagy-mediated lysosomal degradation of host TBK1 and affects IRF3 nuclear translocation to block type I IFN production.</text>
</comment>
<comment type="subunit">
    <text evidence="1">Interacts with host TBK1.</text>
</comment>
<comment type="subcellular location">
    <subcellularLocation>
        <location evidence="1">Virion</location>
    </subcellularLocation>
    <subcellularLocation>
        <location evidence="1">Host cytoplasm</location>
    </subcellularLocation>
</comment>
<comment type="induction">
    <text evidence="2">Expressed in the late phase of the viral replicative cycle.</text>
</comment>
<comment type="similarity">
    <text evidence="2">Belongs to the asfivirus A137R family.</text>
</comment>
<protein>
    <recommendedName>
        <fullName>Structural protein A137R</fullName>
    </recommendedName>
</protein>
<reference key="1">
    <citation type="submission" date="2003-03" db="EMBL/GenBank/DDBJ databases">
        <title>African swine fever virus genomes.</title>
        <authorList>
            <person name="Kutish G.F."/>
            <person name="Rock D.L."/>
        </authorList>
    </citation>
    <scope>NUCLEOTIDE SEQUENCE [LARGE SCALE GENOMIC DNA]</scope>
</reference>
<organismHost>
    <name type="scientific">Ornithodoros</name>
    <name type="common">relapsing fever ticks</name>
    <dbReference type="NCBI Taxonomy" id="6937"/>
</organismHost>
<organismHost>
    <name type="scientific">Phacochoerus aethiopicus</name>
    <name type="common">Warthog</name>
    <dbReference type="NCBI Taxonomy" id="85517"/>
</organismHost>
<organismHost>
    <name type="scientific">Phacochoerus africanus</name>
    <name type="common">Warthog</name>
    <dbReference type="NCBI Taxonomy" id="41426"/>
</organismHost>
<organismHost>
    <name type="scientific">Potamochoerus larvatus</name>
    <name type="common">Bushpig</name>
    <dbReference type="NCBI Taxonomy" id="273792"/>
</organismHost>
<organismHost>
    <name type="scientific">Sus scrofa</name>
    <name type="common">Pig</name>
    <dbReference type="NCBI Taxonomy" id="9823"/>
</organismHost>
<proteinExistence type="inferred from homology"/>
<accession>P0CA46</accession>
<organism>
    <name type="scientific">African swine fever virus (isolate Tick/South Africa/Pretoriuskop Pr4/1996)</name>
    <name type="common">ASFV</name>
    <dbReference type="NCBI Taxonomy" id="561443"/>
    <lineage>
        <taxon>Viruses</taxon>
        <taxon>Varidnaviria</taxon>
        <taxon>Bamfordvirae</taxon>
        <taxon>Nucleocytoviricota</taxon>
        <taxon>Pokkesviricetes</taxon>
        <taxon>Asfuvirales</taxon>
        <taxon>Asfarviridae</taxon>
        <taxon>Asfivirus</taxon>
        <taxon>African swine fever virus</taxon>
    </lineage>
</organism>
<keyword id="KW-1035">Host cytoplasm</keyword>
<keyword id="KW-0426">Late protein</keyword>
<keyword id="KW-0946">Virion</keyword>
<evidence type="ECO:0000250" key="1">
    <source>
        <dbReference type="UniProtKB" id="Q07344"/>
    </source>
</evidence>
<evidence type="ECO:0000305" key="2"/>
<sequence>MEAVLTKLDQEEKRALQDFHRCAWEETKNVINDFLEIPEERCTYKFNPYTKKMELLFTPEFHTAWQEVPECREFILNFLRLISGHRVVLKGPTIVFTKEIKNLGIPSTINVDFQANIENMDDLQKGNLIGKMNIKES</sequence>
<gene>
    <name type="ordered locus">Pret-054</name>
</gene>
<name>VF137_ASFP4</name>
<dbReference type="EMBL" id="AY261363">
    <property type="status" value="NOT_ANNOTATED_CDS"/>
    <property type="molecule type" value="Genomic_DNA"/>
</dbReference>
<dbReference type="SMR" id="P0CA46"/>
<dbReference type="Proteomes" id="UP000000859">
    <property type="component" value="Segment"/>
</dbReference>
<dbReference type="GO" id="GO:0030430">
    <property type="term" value="C:host cell cytoplasm"/>
    <property type="evidence" value="ECO:0007669"/>
    <property type="project" value="UniProtKB-SubCell"/>
</dbReference>
<dbReference type="GO" id="GO:0044423">
    <property type="term" value="C:virion component"/>
    <property type="evidence" value="ECO:0007669"/>
    <property type="project" value="UniProtKB-KW"/>
</dbReference>